<protein>
    <recommendedName>
        <fullName evidence="1">Indole-3-glycerol phosphate synthase</fullName>
        <shortName evidence="1">IGPS</shortName>
        <ecNumber evidence="1">4.1.1.48</ecNumber>
    </recommendedName>
</protein>
<name>TRPC_PSEPK</name>
<dbReference type="EC" id="4.1.1.48" evidence="1"/>
<dbReference type="EMBL" id="AE015451">
    <property type="protein sequence ID" value="AAN66052.1"/>
    <property type="molecule type" value="Genomic_DNA"/>
</dbReference>
<dbReference type="RefSeq" id="NP_742588.1">
    <property type="nucleotide sequence ID" value="NC_002947.4"/>
</dbReference>
<dbReference type="RefSeq" id="WP_010951757.1">
    <property type="nucleotide sequence ID" value="NZ_CP169744.1"/>
</dbReference>
<dbReference type="SMR" id="Q88QR6"/>
<dbReference type="STRING" id="160488.PP_0422"/>
<dbReference type="PaxDb" id="160488-PP_0422"/>
<dbReference type="GeneID" id="83677713"/>
<dbReference type="KEGG" id="ppu:PP_0422"/>
<dbReference type="PATRIC" id="fig|160488.4.peg.453"/>
<dbReference type="eggNOG" id="COG0134">
    <property type="taxonomic scope" value="Bacteria"/>
</dbReference>
<dbReference type="HOGENOM" id="CLU_034247_2_0_6"/>
<dbReference type="OrthoDB" id="9804217at2"/>
<dbReference type="PhylomeDB" id="Q88QR6"/>
<dbReference type="BioCyc" id="PPUT160488:G1G01-458-MONOMER"/>
<dbReference type="UniPathway" id="UPA00035">
    <property type="reaction ID" value="UER00043"/>
</dbReference>
<dbReference type="Proteomes" id="UP000000556">
    <property type="component" value="Chromosome"/>
</dbReference>
<dbReference type="GO" id="GO:0004425">
    <property type="term" value="F:indole-3-glycerol-phosphate synthase activity"/>
    <property type="evidence" value="ECO:0007669"/>
    <property type="project" value="UniProtKB-UniRule"/>
</dbReference>
<dbReference type="GO" id="GO:0004640">
    <property type="term" value="F:phosphoribosylanthranilate isomerase activity"/>
    <property type="evidence" value="ECO:0007669"/>
    <property type="project" value="TreeGrafter"/>
</dbReference>
<dbReference type="GO" id="GO:0000162">
    <property type="term" value="P:L-tryptophan biosynthetic process"/>
    <property type="evidence" value="ECO:0007669"/>
    <property type="project" value="UniProtKB-UniRule"/>
</dbReference>
<dbReference type="CDD" id="cd00331">
    <property type="entry name" value="IGPS"/>
    <property type="match status" value="1"/>
</dbReference>
<dbReference type="FunFam" id="3.20.20.70:FF:000024">
    <property type="entry name" value="Indole-3-glycerol phosphate synthase"/>
    <property type="match status" value="1"/>
</dbReference>
<dbReference type="Gene3D" id="3.20.20.70">
    <property type="entry name" value="Aldolase class I"/>
    <property type="match status" value="1"/>
</dbReference>
<dbReference type="HAMAP" id="MF_00134_B">
    <property type="entry name" value="IGPS_B"/>
    <property type="match status" value="1"/>
</dbReference>
<dbReference type="InterPro" id="IPR013785">
    <property type="entry name" value="Aldolase_TIM"/>
</dbReference>
<dbReference type="InterPro" id="IPR045186">
    <property type="entry name" value="Indole-3-glycerol_P_synth"/>
</dbReference>
<dbReference type="InterPro" id="IPR013798">
    <property type="entry name" value="Indole-3-glycerol_P_synth_dom"/>
</dbReference>
<dbReference type="InterPro" id="IPR001468">
    <property type="entry name" value="Indole-3-GlycerolPSynthase_CS"/>
</dbReference>
<dbReference type="InterPro" id="IPR011060">
    <property type="entry name" value="RibuloseP-bd_barrel"/>
</dbReference>
<dbReference type="NCBIfam" id="NF001370">
    <property type="entry name" value="PRK00278.1-2"/>
    <property type="match status" value="1"/>
</dbReference>
<dbReference type="NCBIfam" id="NF001373">
    <property type="entry name" value="PRK00278.1-6"/>
    <property type="match status" value="1"/>
</dbReference>
<dbReference type="NCBIfam" id="NF001377">
    <property type="entry name" value="PRK00278.2-4"/>
    <property type="match status" value="1"/>
</dbReference>
<dbReference type="PANTHER" id="PTHR22854:SF2">
    <property type="entry name" value="INDOLE-3-GLYCEROL-PHOSPHATE SYNTHASE"/>
    <property type="match status" value="1"/>
</dbReference>
<dbReference type="PANTHER" id="PTHR22854">
    <property type="entry name" value="TRYPTOPHAN BIOSYNTHESIS PROTEIN"/>
    <property type="match status" value="1"/>
</dbReference>
<dbReference type="Pfam" id="PF00218">
    <property type="entry name" value="IGPS"/>
    <property type="match status" value="1"/>
</dbReference>
<dbReference type="SUPFAM" id="SSF51366">
    <property type="entry name" value="Ribulose-phoshate binding barrel"/>
    <property type="match status" value="1"/>
</dbReference>
<dbReference type="PROSITE" id="PS00614">
    <property type="entry name" value="IGPS"/>
    <property type="match status" value="1"/>
</dbReference>
<organism>
    <name type="scientific">Pseudomonas putida (strain ATCC 47054 / DSM 6125 / CFBP 8728 / NCIMB 11950 / KT2440)</name>
    <dbReference type="NCBI Taxonomy" id="160488"/>
    <lineage>
        <taxon>Bacteria</taxon>
        <taxon>Pseudomonadati</taxon>
        <taxon>Pseudomonadota</taxon>
        <taxon>Gammaproteobacteria</taxon>
        <taxon>Pseudomonadales</taxon>
        <taxon>Pseudomonadaceae</taxon>
        <taxon>Pseudomonas</taxon>
    </lineage>
</organism>
<proteinExistence type="inferred from homology"/>
<sequence length="277" mass="30433">MSVPTVLERIIARKFQEVAERSAHVSLAELEGLAKAADAPRGFANALIEQAKRKQPAVIAEIKKASPSKGVIREHFVPAEIAVSYEKGGATCLSVLTDVDYFQGADEYLQQARAAVSLPVIRKDFMVDPYQIVEARALGADCVLLIVSALDDVKMAELAATAKDVGLDVLVEVHDGDELERALKTLDTPLVGVNNRNLHTFEVSLETTLDLLPRIPRDRLAITESGILNRADVELMAINEVYSFLVGEAFMRAEQPGLELQRLFFPEQVKKTVQQLD</sequence>
<feature type="chain" id="PRO_0000154240" description="Indole-3-glycerol phosphate synthase">
    <location>
        <begin position="1"/>
        <end position="277"/>
    </location>
</feature>
<comment type="catalytic activity">
    <reaction evidence="1">
        <text>1-(2-carboxyphenylamino)-1-deoxy-D-ribulose 5-phosphate + H(+) = (1S,2R)-1-C-(indol-3-yl)glycerol 3-phosphate + CO2 + H2O</text>
        <dbReference type="Rhea" id="RHEA:23476"/>
        <dbReference type="ChEBI" id="CHEBI:15377"/>
        <dbReference type="ChEBI" id="CHEBI:15378"/>
        <dbReference type="ChEBI" id="CHEBI:16526"/>
        <dbReference type="ChEBI" id="CHEBI:58613"/>
        <dbReference type="ChEBI" id="CHEBI:58866"/>
        <dbReference type="EC" id="4.1.1.48"/>
    </reaction>
</comment>
<comment type="pathway">
    <text evidence="1">Amino-acid biosynthesis; L-tryptophan biosynthesis; L-tryptophan from chorismate: step 4/5.</text>
</comment>
<comment type="similarity">
    <text evidence="1">Belongs to the TrpC family.</text>
</comment>
<gene>
    <name evidence="1" type="primary">trpC</name>
    <name type="ordered locus">PP_0422</name>
</gene>
<keyword id="KW-0028">Amino-acid biosynthesis</keyword>
<keyword id="KW-0057">Aromatic amino acid biosynthesis</keyword>
<keyword id="KW-0210">Decarboxylase</keyword>
<keyword id="KW-0456">Lyase</keyword>
<keyword id="KW-1185">Reference proteome</keyword>
<keyword id="KW-0822">Tryptophan biosynthesis</keyword>
<evidence type="ECO:0000255" key="1">
    <source>
        <dbReference type="HAMAP-Rule" id="MF_00134"/>
    </source>
</evidence>
<reference key="1">
    <citation type="journal article" date="2002" name="Environ. Microbiol.">
        <title>Complete genome sequence and comparative analysis of the metabolically versatile Pseudomonas putida KT2440.</title>
        <authorList>
            <person name="Nelson K.E."/>
            <person name="Weinel C."/>
            <person name="Paulsen I.T."/>
            <person name="Dodson R.J."/>
            <person name="Hilbert H."/>
            <person name="Martins dos Santos V.A.P."/>
            <person name="Fouts D.E."/>
            <person name="Gill S.R."/>
            <person name="Pop M."/>
            <person name="Holmes M."/>
            <person name="Brinkac L.M."/>
            <person name="Beanan M.J."/>
            <person name="DeBoy R.T."/>
            <person name="Daugherty S.C."/>
            <person name="Kolonay J.F."/>
            <person name="Madupu R."/>
            <person name="Nelson W.C."/>
            <person name="White O."/>
            <person name="Peterson J.D."/>
            <person name="Khouri H.M."/>
            <person name="Hance I."/>
            <person name="Chris Lee P."/>
            <person name="Holtzapple E.K."/>
            <person name="Scanlan D."/>
            <person name="Tran K."/>
            <person name="Moazzez A."/>
            <person name="Utterback T.R."/>
            <person name="Rizzo M."/>
            <person name="Lee K."/>
            <person name="Kosack D."/>
            <person name="Moestl D."/>
            <person name="Wedler H."/>
            <person name="Lauber J."/>
            <person name="Stjepandic D."/>
            <person name="Hoheisel J."/>
            <person name="Straetz M."/>
            <person name="Heim S."/>
            <person name="Kiewitz C."/>
            <person name="Eisen J.A."/>
            <person name="Timmis K.N."/>
            <person name="Duesterhoeft A."/>
            <person name="Tuemmler B."/>
            <person name="Fraser C.M."/>
        </authorList>
    </citation>
    <scope>NUCLEOTIDE SEQUENCE [LARGE SCALE GENOMIC DNA]</scope>
    <source>
        <strain>ATCC 47054 / DSM 6125 / CFBP 8728 / NCIMB 11950 / KT2440</strain>
    </source>
</reference>
<accession>Q88QR6</accession>